<feature type="chain" id="PRO_0000390530" description="Pseudouridine-5'-phosphate glycosidase">
    <location>
        <begin position="1"/>
        <end position="301"/>
    </location>
</feature>
<feature type="active site" description="Proton donor" evidence="1">
    <location>
        <position position="23"/>
    </location>
</feature>
<feature type="active site" description="Nucleophile" evidence="1">
    <location>
        <position position="157"/>
    </location>
</feature>
<feature type="binding site" evidence="1">
    <location>
        <position position="84"/>
    </location>
    <ligand>
        <name>substrate</name>
    </ligand>
</feature>
<feature type="binding site" evidence="1">
    <location>
        <position position="104"/>
    </location>
    <ligand>
        <name>substrate</name>
    </ligand>
</feature>
<feature type="binding site" evidence="1">
    <location>
        <position position="136"/>
    </location>
    <ligand>
        <name>Mn(2+)</name>
        <dbReference type="ChEBI" id="CHEBI:29035"/>
    </ligand>
</feature>
<feature type="binding site" evidence="1">
    <location>
        <begin position="138"/>
        <end position="140"/>
    </location>
    <ligand>
        <name>substrate</name>
    </ligand>
</feature>
<evidence type="ECO:0000255" key="1">
    <source>
        <dbReference type="HAMAP-Rule" id="MF_01876"/>
    </source>
</evidence>
<proteinExistence type="inferred from homology"/>
<name>PSUG_MYCAP</name>
<comment type="function">
    <text evidence="1">Catalyzes the reversible cleavage of pseudouridine 5'-phosphate (PsiMP) to ribose 5-phosphate and uracil. Functions biologically in the cleavage direction, as part of a pseudouridine degradation pathway.</text>
</comment>
<comment type="catalytic activity">
    <reaction evidence="1">
        <text>D-ribose 5-phosphate + uracil = psi-UMP + H2O</text>
        <dbReference type="Rhea" id="RHEA:18337"/>
        <dbReference type="ChEBI" id="CHEBI:15377"/>
        <dbReference type="ChEBI" id="CHEBI:17568"/>
        <dbReference type="ChEBI" id="CHEBI:58380"/>
        <dbReference type="ChEBI" id="CHEBI:78346"/>
        <dbReference type="EC" id="4.2.1.70"/>
    </reaction>
</comment>
<comment type="cofactor">
    <cofactor evidence="1">
        <name>Mn(2+)</name>
        <dbReference type="ChEBI" id="CHEBI:29035"/>
    </cofactor>
    <text evidence="1">Binds 1 Mn(2+) ion per subunit.</text>
</comment>
<comment type="subunit">
    <text evidence="1">Homotrimer.</text>
</comment>
<comment type="similarity">
    <text evidence="1">Belongs to the pseudouridine-5'-phosphate glycosidase family.</text>
</comment>
<dbReference type="EC" id="4.2.1.70" evidence="1"/>
<dbReference type="EMBL" id="CU179680">
    <property type="protein sequence ID" value="CAL58722.1"/>
    <property type="molecule type" value="Genomic_DNA"/>
</dbReference>
<dbReference type="RefSeq" id="WP_011949208.1">
    <property type="nucleotide sequence ID" value="NC_009497.1"/>
</dbReference>
<dbReference type="SMR" id="A5IXG3"/>
<dbReference type="STRING" id="347257.MAG0250"/>
<dbReference type="GeneID" id="93357794"/>
<dbReference type="KEGG" id="maa:MAG0250"/>
<dbReference type="HOGENOM" id="CLU_012201_0_1_14"/>
<dbReference type="Proteomes" id="UP000007065">
    <property type="component" value="Chromosome"/>
</dbReference>
<dbReference type="GO" id="GO:0005737">
    <property type="term" value="C:cytoplasm"/>
    <property type="evidence" value="ECO:0007669"/>
    <property type="project" value="TreeGrafter"/>
</dbReference>
<dbReference type="GO" id="GO:0016798">
    <property type="term" value="F:hydrolase activity, acting on glycosyl bonds"/>
    <property type="evidence" value="ECO:0007669"/>
    <property type="project" value="UniProtKB-KW"/>
</dbReference>
<dbReference type="GO" id="GO:0046872">
    <property type="term" value="F:metal ion binding"/>
    <property type="evidence" value="ECO:0007669"/>
    <property type="project" value="UniProtKB-KW"/>
</dbReference>
<dbReference type="GO" id="GO:0004730">
    <property type="term" value="F:pseudouridylate synthase activity"/>
    <property type="evidence" value="ECO:0007669"/>
    <property type="project" value="UniProtKB-UniRule"/>
</dbReference>
<dbReference type="GO" id="GO:0046113">
    <property type="term" value="P:nucleobase catabolic process"/>
    <property type="evidence" value="ECO:0007669"/>
    <property type="project" value="UniProtKB-UniRule"/>
</dbReference>
<dbReference type="Gene3D" id="3.40.1790.10">
    <property type="entry name" value="Indigoidine synthase domain"/>
    <property type="match status" value="1"/>
</dbReference>
<dbReference type="HAMAP" id="MF_01876">
    <property type="entry name" value="PsiMP_glycosidase"/>
    <property type="match status" value="1"/>
</dbReference>
<dbReference type="InterPro" id="IPR022830">
    <property type="entry name" value="Indigdn_synthA-like"/>
</dbReference>
<dbReference type="InterPro" id="IPR007342">
    <property type="entry name" value="PsuG"/>
</dbReference>
<dbReference type="PANTHER" id="PTHR42909:SF1">
    <property type="entry name" value="CARBOHYDRATE KINASE PFKB DOMAIN-CONTAINING PROTEIN"/>
    <property type="match status" value="1"/>
</dbReference>
<dbReference type="PANTHER" id="PTHR42909">
    <property type="entry name" value="ZGC:136858"/>
    <property type="match status" value="1"/>
</dbReference>
<dbReference type="Pfam" id="PF04227">
    <property type="entry name" value="Indigoidine_A"/>
    <property type="match status" value="1"/>
</dbReference>
<dbReference type="SUPFAM" id="SSF110581">
    <property type="entry name" value="Indigoidine synthase A-like"/>
    <property type="match status" value="1"/>
</dbReference>
<gene>
    <name evidence="1" type="primary">psuG</name>
    <name type="ordered locus">MAG0250</name>
</gene>
<accession>A5IXG3</accession>
<sequence>MNIVFSKEVESALKHKRPVVALESTIITHGMPYPKNVEMALNVENIIRKQGAVPATIAIINGIIHVGLENDEINELAKLKDVIKTSKRDFGYVLANKKNGGTTVSGTVLVAQKVGIPVFATGGIGGVHRGAEITFDISRDLDELSTNNVLVVCAGAKLILDLGLTLEYLETKGVEVLGYNSDKLPAFYSSSSEFNVTYNVHSASEVAAIMKAKWKFTNGGIILANPIPEQYGLEYEYILDNINKAIEQAKVEGISGKKTTPYLLSKVLELTEGKSLEANIQLVYNNAKVAAQVAVEYAKQK</sequence>
<organism>
    <name type="scientific">Mycoplasmopsis agalactiae (strain NCTC 10123 / CIP 59.7 / PG2)</name>
    <name type="common">Mycoplasma agalactiae</name>
    <dbReference type="NCBI Taxonomy" id="347257"/>
    <lineage>
        <taxon>Bacteria</taxon>
        <taxon>Bacillati</taxon>
        <taxon>Mycoplasmatota</taxon>
        <taxon>Mycoplasmoidales</taxon>
        <taxon>Metamycoplasmataceae</taxon>
        <taxon>Mycoplasmopsis</taxon>
    </lineage>
</organism>
<protein>
    <recommendedName>
        <fullName evidence="1">Pseudouridine-5'-phosphate glycosidase</fullName>
        <shortName evidence="1">PsiMP glycosidase</shortName>
        <ecNumber evidence="1">4.2.1.70</ecNumber>
    </recommendedName>
</protein>
<keyword id="KW-0326">Glycosidase</keyword>
<keyword id="KW-0378">Hydrolase</keyword>
<keyword id="KW-0456">Lyase</keyword>
<keyword id="KW-0464">Manganese</keyword>
<keyword id="KW-0479">Metal-binding</keyword>
<keyword id="KW-1185">Reference proteome</keyword>
<reference key="1">
    <citation type="journal article" date="2007" name="PLoS Genet.">
        <title>Being pathogenic, plastic, and sexual while living with a nearly minimal bacterial genome.</title>
        <authorList>
            <person name="Sirand-Pugnet P."/>
            <person name="Lartigue C."/>
            <person name="Marenda M."/>
            <person name="Jacob D."/>
            <person name="Barre A."/>
            <person name="Barbe V."/>
            <person name="Schenowitz C."/>
            <person name="Mangenot S."/>
            <person name="Couloux A."/>
            <person name="Segurens B."/>
            <person name="de Daruvar A."/>
            <person name="Blanchard A."/>
            <person name="Citti C."/>
        </authorList>
    </citation>
    <scope>NUCLEOTIDE SEQUENCE [LARGE SCALE GENOMIC DNA]</scope>
    <source>
        <strain>NCTC 10123 / CIP 59.7 / PG2</strain>
    </source>
</reference>